<organism>
    <name type="scientific">Escherichia coli O6:K15:H31 (strain 536 / UPEC)</name>
    <dbReference type="NCBI Taxonomy" id="362663"/>
    <lineage>
        <taxon>Bacteria</taxon>
        <taxon>Pseudomonadati</taxon>
        <taxon>Pseudomonadota</taxon>
        <taxon>Gammaproteobacteria</taxon>
        <taxon>Enterobacterales</taxon>
        <taxon>Enterobacteriaceae</taxon>
        <taxon>Escherichia</taxon>
    </lineage>
</organism>
<dbReference type="EMBL" id="CP000247">
    <property type="protein sequence ID" value="ABG69270.1"/>
    <property type="molecule type" value="Genomic_DNA"/>
</dbReference>
<dbReference type="RefSeq" id="WP_000804726.1">
    <property type="nucleotide sequence ID" value="NC_008253.1"/>
</dbReference>
<dbReference type="SMR" id="Q0TIF9"/>
<dbReference type="GeneID" id="93775276"/>
<dbReference type="KEGG" id="ecp:ECP_1259"/>
<dbReference type="HOGENOM" id="CLU_036856_0_1_6"/>
<dbReference type="Proteomes" id="UP000009182">
    <property type="component" value="Chromosome"/>
</dbReference>
<dbReference type="GO" id="GO:0005737">
    <property type="term" value="C:cytoplasm"/>
    <property type="evidence" value="ECO:0007669"/>
    <property type="project" value="UniProtKB-SubCell"/>
</dbReference>
<dbReference type="GO" id="GO:0016149">
    <property type="term" value="F:translation release factor activity, codon specific"/>
    <property type="evidence" value="ECO:0007669"/>
    <property type="project" value="UniProtKB-UniRule"/>
</dbReference>
<dbReference type="FunFam" id="3.30.160.20:FF:000004">
    <property type="entry name" value="Peptide chain release factor 1"/>
    <property type="match status" value="1"/>
</dbReference>
<dbReference type="FunFam" id="3.30.70.1660:FF:000002">
    <property type="entry name" value="Peptide chain release factor 1"/>
    <property type="match status" value="1"/>
</dbReference>
<dbReference type="FunFam" id="3.30.70.1660:FF:000004">
    <property type="entry name" value="Peptide chain release factor 1"/>
    <property type="match status" value="1"/>
</dbReference>
<dbReference type="Gene3D" id="3.30.160.20">
    <property type="match status" value="1"/>
</dbReference>
<dbReference type="Gene3D" id="3.30.70.1660">
    <property type="match status" value="1"/>
</dbReference>
<dbReference type="Gene3D" id="6.10.140.1950">
    <property type="match status" value="1"/>
</dbReference>
<dbReference type="HAMAP" id="MF_00093">
    <property type="entry name" value="Rel_fac_1"/>
    <property type="match status" value="1"/>
</dbReference>
<dbReference type="InterPro" id="IPR005139">
    <property type="entry name" value="PCRF"/>
</dbReference>
<dbReference type="InterPro" id="IPR000352">
    <property type="entry name" value="Pep_chain_release_fac_I"/>
</dbReference>
<dbReference type="InterPro" id="IPR045853">
    <property type="entry name" value="Pep_chain_release_fac_I_sf"/>
</dbReference>
<dbReference type="InterPro" id="IPR050057">
    <property type="entry name" value="Prokaryotic/Mito_RF"/>
</dbReference>
<dbReference type="InterPro" id="IPR004373">
    <property type="entry name" value="RF-1"/>
</dbReference>
<dbReference type="NCBIfam" id="TIGR00019">
    <property type="entry name" value="prfA"/>
    <property type="match status" value="1"/>
</dbReference>
<dbReference type="NCBIfam" id="NF001859">
    <property type="entry name" value="PRK00591.1"/>
    <property type="match status" value="1"/>
</dbReference>
<dbReference type="PANTHER" id="PTHR43804">
    <property type="entry name" value="LD18447P"/>
    <property type="match status" value="1"/>
</dbReference>
<dbReference type="PANTHER" id="PTHR43804:SF7">
    <property type="entry name" value="LD18447P"/>
    <property type="match status" value="1"/>
</dbReference>
<dbReference type="Pfam" id="PF03462">
    <property type="entry name" value="PCRF"/>
    <property type="match status" value="1"/>
</dbReference>
<dbReference type="Pfam" id="PF00472">
    <property type="entry name" value="RF-1"/>
    <property type="match status" value="1"/>
</dbReference>
<dbReference type="SMART" id="SM00937">
    <property type="entry name" value="PCRF"/>
    <property type="match status" value="1"/>
</dbReference>
<dbReference type="SUPFAM" id="SSF75620">
    <property type="entry name" value="Release factor"/>
    <property type="match status" value="1"/>
</dbReference>
<dbReference type="PROSITE" id="PS00745">
    <property type="entry name" value="RF_PROK_I"/>
    <property type="match status" value="1"/>
</dbReference>
<protein>
    <recommendedName>
        <fullName evidence="1">Peptide chain release factor 1</fullName>
        <shortName evidence="1">RF-1</shortName>
    </recommendedName>
</protein>
<feature type="chain" id="PRO_0000263274" description="Peptide chain release factor 1">
    <location>
        <begin position="1"/>
        <end position="360"/>
    </location>
</feature>
<feature type="region of interest" description="Disordered" evidence="2">
    <location>
        <begin position="284"/>
        <end position="313"/>
    </location>
</feature>
<feature type="modified residue" description="N5-methylglutamine" evidence="1">
    <location>
        <position position="235"/>
    </location>
</feature>
<accession>Q0TIF9</accession>
<proteinExistence type="inferred from homology"/>
<reference key="1">
    <citation type="journal article" date="2006" name="Mol. Microbiol.">
        <title>Role of pathogenicity island-associated integrases in the genome plasticity of uropathogenic Escherichia coli strain 536.</title>
        <authorList>
            <person name="Hochhut B."/>
            <person name="Wilde C."/>
            <person name="Balling G."/>
            <person name="Middendorf B."/>
            <person name="Dobrindt U."/>
            <person name="Brzuszkiewicz E."/>
            <person name="Gottschalk G."/>
            <person name="Carniel E."/>
            <person name="Hacker J."/>
        </authorList>
    </citation>
    <scope>NUCLEOTIDE SEQUENCE [LARGE SCALE GENOMIC DNA]</scope>
    <source>
        <strain>536 / UPEC</strain>
    </source>
</reference>
<evidence type="ECO:0000255" key="1">
    <source>
        <dbReference type="HAMAP-Rule" id="MF_00093"/>
    </source>
</evidence>
<evidence type="ECO:0000256" key="2">
    <source>
        <dbReference type="SAM" id="MobiDB-lite"/>
    </source>
</evidence>
<name>RF1_ECOL5</name>
<sequence length="360" mass="40517">MKPSIVAKLEALHERHEEVQALLGDAQTIADQERFRALSREYAQLSDVSRCFTDWQQVQEDIETAQMMLDDPEMREMAQDELREAKEKSEQLEQQLQVLLLPKDPDDERNAFLEVRAGTGGDEAALFAGDLFRMYSRYAEARRWRVEIMSASEGEHGGYKEIIAKISGDGVYGRLKFESGGHRVQRVPATESQGRIHTSACTVAVMPELPDAELPDINPADLRIDTFRSSGAGGQHVNTTDSAIRITHLPTGIVVECQDERSQHKNKAKALSVLGARIHAAEMAKRQQAEASTRRNLLGSGDRSDRNRTYNFPQGRVTDHRINLTLYRLDEVMEGKLDMLIEPIIQEHQADQLAALSEQE</sequence>
<gene>
    <name evidence="1" type="primary">prfA</name>
    <name type="ordered locus">ECP_1259</name>
</gene>
<comment type="function">
    <text evidence="1">Peptide chain release factor 1 directs the termination of translation in response to the peptide chain termination codons UAG and UAA.</text>
</comment>
<comment type="subcellular location">
    <subcellularLocation>
        <location evidence="1">Cytoplasm</location>
    </subcellularLocation>
</comment>
<comment type="PTM">
    <text evidence="1">Methylated by PrmC. Methylation increases the termination efficiency of RF1.</text>
</comment>
<comment type="similarity">
    <text evidence="1">Belongs to the prokaryotic/mitochondrial release factor family.</text>
</comment>
<keyword id="KW-0963">Cytoplasm</keyword>
<keyword id="KW-0488">Methylation</keyword>
<keyword id="KW-0648">Protein biosynthesis</keyword>